<protein>
    <recommendedName>
        <fullName>Putative serine/threonine-protein kinase L268</fullName>
        <ecNumber>2.7.11.1</ecNumber>
    </recommendedName>
</protein>
<proteinExistence type="inferred from homology"/>
<name>YL268_MIMIV</name>
<comment type="catalytic activity">
    <reaction>
        <text>L-seryl-[protein] + ATP = O-phospho-L-seryl-[protein] + ADP + H(+)</text>
        <dbReference type="Rhea" id="RHEA:17989"/>
        <dbReference type="Rhea" id="RHEA-COMP:9863"/>
        <dbReference type="Rhea" id="RHEA-COMP:11604"/>
        <dbReference type="ChEBI" id="CHEBI:15378"/>
        <dbReference type="ChEBI" id="CHEBI:29999"/>
        <dbReference type="ChEBI" id="CHEBI:30616"/>
        <dbReference type="ChEBI" id="CHEBI:83421"/>
        <dbReference type="ChEBI" id="CHEBI:456216"/>
        <dbReference type="EC" id="2.7.11.1"/>
    </reaction>
</comment>
<comment type="catalytic activity">
    <reaction>
        <text>L-threonyl-[protein] + ATP = O-phospho-L-threonyl-[protein] + ADP + H(+)</text>
        <dbReference type="Rhea" id="RHEA:46608"/>
        <dbReference type="Rhea" id="RHEA-COMP:11060"/>
        <dbReference type="Rhea" id="RHEA-COMP:11605"/>
        <dbReference type="ChEBI" id="CHEBI:15378"/>
        <dbReference type="ChEBI" id="CHEBI:30013"/>
        <dbReference type="ChEBI" id="CHEBI:30616"/>
        <dbReference type="ChEBI" id="CHEBI:61977"/>
        <dbReference type="ChEBI" id="CHEBI:456216"/>
        <dbReference type="EC" id="2.7.11.1"/>
    </reaction>
</comment>
<comment type="similarity">
    <text evidence="1">Belongs to the protein kinase superfamily. Ser/Thr protein kinase family.</text>
</comment>
<sequence>MVCFSKYSGITLDMRLILIDWLIEVHYEYECIIDTLCLAIILVDEFVDRIDKIDRKYFQCIGICCMNIATKILEPEHIGSENCNFISASQYTTDVIISYEKNILQTLDFHLVRKTILDSLWSKIKDFSRQKKNMGIFFTIVSMTSDKYKCFPCEKIADGIIKLVDLIDNYPIDSIDYTDEINTDTIMRYLWSQLTICTNKKLDGYTDLIKNLEIDFEFMKKLTSDIILKPKIVLFPSKNLELYTPLRHCFQYNTEDISNITVVKNLGEGTYGTVDLVTLNASKAAIKTQKELNEEISPDMVNEIVFLRIMDHPNIIKLYGYHLGSQTKLVLEPMESSLRRFIIDDTWNNLNKTLGITNNIFSDNQKIFYIKQLLEGLKYLHENRIVHGDLTCSNILISKSKLKICDFGSSKIIHPKNKLNYKTSKCSLWYRAIELLLEQNYDEKIDVWSVACICGFILGDKLFDGDNESEIIENIFSHLGTPDPIIFESKTSINIPTKKYKFVGFEKLEEKYPDITSIIYRMLSYDSKMRISASQTLEEFNKFNSD</sequence>
<reference key="1">
    <citation type="journal article" date="2004" name="Science">
        <title>The 1.2-megabase genome sequence of Mimivirus.</title>
        <authorList>
            <person name="Raoult D."/>
            <person name="Audic S."/>
            <person name="Robert C."/>
            <person name="Abergel C."/>
            <person name="Renesto P."/>
            <person name="Ogata H."/>
            <person name="La Scola B."/>
            <person name="Susan M."/>
            <person name="Claverie J.-M."/>
        </authorList>
    </citation>
    <scope>NUCLEOTIDE SEQUENCE [LARGE SCALE GENOMIC DNA]</scope>
    <source>
        <strain>Rowbotham-Bradford</strain>
    </source>
</reference>
<evidence type="ECO:0000255" key="1">
    <source>
        <dbReference type="PROSITE-ProRule" id="PRU00159"/>
    </source>
</evidence>
<evidence type="ECO:0000255" key="2">
    <source>
        <dbReference type="PROSITE-ProRule" id="PRU10028"/>
    </source>
</evidence>
<keyword id="KW-0067">ATP-binding</keyword>
<keyword id="KW-0418">Kinase</keyword>
<keyword id="KW-0547">Nucleotide-binding</keyword>
<keyword id="KW-1185">Reference proteome</keyword>
<keyword id="KW-0723">Serine/threonine-protein kinase</keyword>
<keyword id="KW-0808">Transferase</keyword>
<gene>
    <name type="ordered locus">MIMI_L268</name>
</gene>
<feature type="chain" id="PRO_0000086848" description="Putative serine/threonine-protein kinase L268">
    <location>
        <begin position="1"/>
        <end position="546"/>
    </location>
</feature>
<feature type="domain" description="Cyclin N-terminal">
    <location>
        <begin position="1"/>
        <end position="112"/>
    </location>
</feature>
<feature type="domain" description="Protein kinase" evidence="1">
    <location>
        <begin position="260"/>
        <end position="544"/>
    </location>
</feature>
<feature type="active site" description="Proton acceptor" evidence="1 2">
    <location>
        <position position="389"/>
    </location>
</feature>
<feature type="binding site" evidence="1">
    <location>
        <begin position="266"/>
        <end position="274"/>
    </location>
    <ligand>
        <name>ATP</name>
        <dbReference type="ChEBI" id="CHEBI:30616"/>
    </ligand>
</feature>
<feature type="binding site" evidence="1">
    <location>
        <position position="287"/>
    </location>
    <ligand>
        <name>ATP</name>
        <dbReference type="ChEBI" id="CHEBI:30616"/>
    </ligand>
</feature>
<accession>Q5UPU3</accession>
<dbReference type="EC" id="2.7.11.1"/>
<dbReference type="EMBL" id="AY653733">
    <property type="protein sequence ID" value="AAV50540.1"/>
    <property type="molecule type" value="Genomic_DNA"/>
</dbReference>
<dbReference type="SMR" id="Q5UPU3"/>
<dbReference type="KEGG" id="vg:9924877"/>
<dbReference type="OrthoDB" id="8955at10239"/>
<dbReference type="Proteomes" id="UP000001134">
    <property type="component" value="Genome"/>
</dbReference>
<dbReference type="GO" id="GO:0005524">
    <property type="term" value="F:ATP binding"/>
    <property type="evidence" value="ECO:0007669"/>
    <property type="project" value="UniProtKB-KW"/>
</dbReference>
<dbReference type="GO" id="GO:0106310">
    <property type="term" value="F:protein serine kinase activity"/>
    <property type="evidence" value="ECO:0007669"/>
    <property type="project" value="RHEA"/>
</dbReference>
<dbReference type="GO" id="GO:0004674">
    <property type="term" value="F:protein serine/threonine kinase activity"/>
    <property type="evidence" value="ECO:0007669"/>
    <property type="project" value="UniProtKB-KW"/>
</dbReference>
<dbReference type="FunFam" id="1.10.472.10:FF:000057">
    <property type="entry name" value="Cyclin N-terminal domain containing 2"/>
    <property type="match status" value="1"/>
</dbReference>
<dbReference type="Gene3D" id="1.10.472.10">
    <property type="entry name" value="Cyclin-like"/>
    <property type="match status" value="1"/>
</dbReference>
<dbReference type="Gene3D" id="3.30.200.20">
    <property type="entry name" value="Phosphorylase Kinase, domain 1"/>
    <property type="match status" value="1"/>
</dbReference>
<dbReference type="Gene3D" id="1.10.510.10">
    <property type="entry name" value="Transferase(Phosphotransferase) domain 1"/>
    <property type="match status" value="1"/>
</dbReference>
<dbReference type="InterPro" id="IPR013763">
    <property type="entry name" value="Cyclin-like_dom"/>
</dbReference>
<dbReference type="InterPro" id="IPR036915">
    <property type="entry name" value="Cyclin-like_sf"/>
</dbReference>
<dbReference type="InterPro" id="IPR006671">
    <property type="entry name" value="Cyclin_N"/>
</dbReference>
<dbReference type="InterPro" id="IPR011009">
    <property type="entry name" value="Kinase-like_dom_sf"/>
</dbReference>
<dbReference type="InterPro" id="IPR050117">
    <property type="entry name" value="MAP_kinase"/>
</dbReference>
<dbReference type="InterPro" id="IPR000719">
    <property type="entry name" value="Prot_kinase_dom"/>
</dbReference>
<dbReference type="InterPro" id="IPR008266">
    <property type="entry name" value="Tyr_kinase_AS"/>
</dbReference>
<dbReference type="PANTHER" id="PTHR24055">
    <property type="entry name" value="MITOGEN-ACTIVATED PROTEIN KINASE"/>
    <property type="match status" value="1"/>
</dbReference>
<dbReference type="Pfam" id="PF00134">
    <property type="entry name" value="Cyclin_N"/>
    <property type="match status" value="1"/>
</dbReference>
<dbReference type="Pfam" id="PF00069">
    <property type="entry name" value="Pkinase"/>
    <property type="match status" value="1"/>
</dbReference>
<dbReference type="SMART" id="SM00385">
    <property type="entry name" value="CYCLIN"/>
    <property type="match status" value="1"/>
</dbReference>
<dbReference type="SUPFAM" id="SSF47954">
    <property type="entry name" value="Cyclin-like"/>
    <property type="match status" value="1"/>
</dbReference>
<dbReference type="SUPFAM" id="SSF56112">
    <property type="entry name" value="Protein kinase-like (PK-like)"/>
    <property type="match status" value="1"/>
</dbReference>
<dbReference type="PROSITE" id="PS50011">
    <property type="entry name" value="PROTEIN_KINASE_DOM"/>
    <property type="match status" value="1"/>
</dbReference>
<dbReference type="PROSITE" id="PS00109">
    <property type="entry name" value="PROTEIN_KINASE_TYR"/>
    <property type="match status" value="1"/>
</dbReference>
<organism>
    <name type="scientific">Acanthamoeba polyphaga mimivirus</name>
    <name type="common">APMV</name>
    <dbReference type="NCBI Taxonomy" id="212035"/>
    <lineage>
        <taxon>Viruses</taxon>
        <taxon>Varidnaviria</taxon>
        <taxon>Bamfordvirae</taxon>
        <taxon>Nucleocytoviricota</taxon>
        <taxon>Megaviricetes</taxon>
        <taxon>Imitervirales</taxon>
        <taxon>Mimiviridae</taxon>
        <taxon>Megamimivirinae</taxon>
        <taxon>Mimivirus</taxon>
        <taxon>Mimivirus bradfordmassiliense</taxon>
    </lineage>
</organism>
<organismHost>
    <name type="scientific">Acanthamoeba polyphaga</name>
    <name type="common">Amoeba</name>
    <dbReference type="NCBI Taxonomy" id="5757"/>
</organismHost>